<evidence type="ECO:0000255" key="1">
    <source>
        <dbReference type="HAMAP-Rule" id="MF_01302"/>
    </source>
</evidence>
<evidence type="ECO:0000305" key="2"/>
<accession>Q64NM2</accession>
<gene>
    <name evidence="1" type="primary">rpsH</name>
    <name type="ordered locus">BF4167</name>
</gene>
<reference key="1">
    <citation type="journal article" date="2004" name="Proc. Natl. Acad. Sci. U.S.A.">
        <title>Genomic analysis of Bacteroides fragilis reveals extensive DNA inversions regulating cell surface adaptation.</title>
        <authorList>
            <person name="Kuwahara T."/>
            <person name="Yamashita A."/>
            <person name="Hirakawa H."/>
            <person name="Nakayama H."/>
            <person name="Toh H."/>
            <person name="Okada N."/>
            <person name="Kuhara S."/>
            <person name="Hattori M."/>
            <person name="Hayashi T."/>
            <person name="Ohnishi Y."/>
        </authorList>
    </citation>
    <scope>NUCLEOTIDE SEQUENCE [LARGE SCALE GENOMIC DNA]</scope>
    <source>
        <strain>YCH46</strain>
    </source>
</reference>
<dbReference type="EMBL" id="AP006841">
    <property type="protein sequence ID" value="BAD50910.1"/>
    <property type="molecule type" value="Genomic_DNA"/>
</dbReference>
<dbReference type="RefSeq" id="WP_005782213.1">
    <property type="nucleotide sequence ID" value="NZ_UYXF01000007.1"/>
</dbReference>
<dbReference type="RefSeq" id="YP_101444.1">
    <property type="nucleotide sequence ID" value="NC_006347.1"/>
</dbReference>
<dbReference type="SMR" id="Q64NM2"/>
<dbReference type="STRING" id="295405.BF4167"/>
<dbReference type="GeneID" id="93105310"/>
<dbReference type="KEGG" id="bfr:BF4167"/>
<dbReference type="PATRIC" id="fig|295405.11.peg.4021"/>
<dbReference type="HOGENOM" id="CLU_098428_0_2_10"/>
<dbReference type="OrthoDB" id="9802617at2"/>
<dbReference type="Proteomes" id="UP000002197">
    <property type="component" value="Chromosome"/>
</dbReference>
<dbReference type="GO" id="GO:1990904">
    <property type="term" value="C:ribonucleoprotein complex"/>
    <property type="evidence" value="ECO:0007669"/>
    <property type="project" value="UniProtKB-KW"/>
</dbReference>
<dbReference type="GO" id="GO:0005840">
    <property type="term" value="C:ribosome"/>
    <property type="evidence" value="ECO:0007669"/>
    <property type="project" value="UniProtKB-KW"/>
</dbReference>
<dbReference type="GO" id="GO:0019843">
    <property type="term" value="F:rRNA binding"/>
    <property type="evidence" value="ECO:0007669"/>
    <property type="project" value="UniProtKB-UniRule"/>
</dbReference>
<dbReference type="GO" id="GO:0003735">
    <property type="term" value="F:structural constituent of ribosome"/>
    <property type="evidence" value="ECO:0007669"/>
    <property type="project" value="InterPro"/>
</dbReference>
<dbReference type="GO" id="GO:0006412">
    <property type="term" value="P:translation"/>
    <property type="evidence" value="ECO:0007669"/>
    <property type="project" value="UniProtKB-UniRule"/>
</dbReference>
<dbReference type="FunFam" id="3.30.1370.30:FF:000005">
    <property type="entry name" value="30S ribosomal protein S8"/>
    <property type="match status" value="1"/>
</dbReference>
<dbReference type="FunFam" id="3.30.1490.10:FF:000001">
    <property type="entry name" value="30S ribosomal protein S8"/>
    <property type="match status" value="1"/>
</dbReference>
<dbReference type="Gene3D" id="3.30.1370.30">
    <property type="match status" value="1"/>
</dbReference>
<dbReference type="Gene3D" id="3.30.1490.10">
    <property type="match status" value="1"/>
</dbReference>
<dbReference type="HAMAP" id="MF_01302_B">
    <property type="entry name" value="Ribosomal_uS8_B"/>
    <property type="match status" value="1"/>
</dbReference>
<dbReference type="InterPro" id="IPR000630">
    <property type="entry name" value="Ribosomal_uS8"/>
</dbReference>
<dbReference type="InterPro" id="IPR047863">
    <property type="entry name" value="Ribosomal_uS8_CS"/>
</dbReference>
<dbReference type="InterPro" id="IPR035987">
    <property type="entry name" value="Ribosomal_uS8_sf"/>
</dbReference>
<dbReference type="NCBIfam" id="NF001109">
    <property type="entry name" value="PRK00136.1"/>
    <property type="match status" value="1"/>
</dbReference>
<dbReference type="PANTHER" id="PTHR11758">
    <property type="entry name" value="40S RIBOSOMAL PROTEIN S15A"/>
    <property type="match status" value="1"/>
</dbReference>
<dbReference type="Pfam" id="PF00410">
    <property type="entry name" value="Ribosomal_S8"/>
    <property type="match status" value="1"/>
</dbReference>
<dbReference type="SUPFAM" id="SSF56047">
    <property type="entry name" value="Ribosomal protein S8"/>
    <property type="match status" value="1"/>
</dbReference>
<dbReference type="PROSITE" id="PS00053">
    <property type="entry name" value="RIBOSOMAL_S8"/>
    <property type="match status" value="1"/>
</dbReference>
<feature type="chain" id="PRO_0000126361" description="Small ribosomal subunit protein uS8">
    <location>
        <begin position="1"/>
        <end position="131"/>
    </location>
</feature>
<name>RS8_BACFR</name>
<proteinExistence type="inferred from homology"/>
<sequence>MTDPIADYLTRLRNAINAKHRVVEVPASNLKKEITKILFEKGYILNYKFVEDGPQGTIKVALKYDSVNKVNAIKKLERISSPGMRQYTGYKDMPRVINGLGIAIISTSKGVMTNKEAAELKIGGEVLCYVY</sequence>
<comment type="function">
    <text evidence="1">One of the primary rRNA binding proteins, it binds directly to 16S rRNA central domain where it helps coordinate assembly of the platform of the 30S subunit.</text>
</comment>
<comment type="subunit">
    <text evidence="1">Part of the 30S ribosomal subunit. Contacts proteins S5 and S12.</text>
</comment>
<comment type="similarity">
    <text evidence="1">Belongs to the universal ribosomal protein uS8 family.</text>
</comment>
<protein>
    <recommendedName>
        <fullName evidence="1">Small ribosomal subunit protein uS8</fullName>
    </recommendedName>
    <alternativeName>
        <fullName evidence="2">30S ribosomal protein S8</fullName>
    </alternativeName>
</protein>
<organism>
    <name type="scientific">Bacteroides fragilis (strain YCH46)</name>
    <dbReference type="NCBI Taxonomy" id="295405"/>
    <lineage>
        <taxon>Bacteria</taxon>
        <taxon>Pseudomonadati</taxon>
        <taxon>Bacteroidota</taxon>
        <taxon>Bacteroidia</taxon>
        <taxon>Bacteroidales</taxon>
        <taxon>Bacteroidaceae</taxon>
        <taxon>Bacteroides</taxon>
    </lineage>
</organism>
<keyword id="KW-0687">Ribonucleoprotein</keyword>
<keyword id="KW-0689">Ribosomal protein</keyword>
<keyword id="KW-0694">RNA-binding</keyword>
<keyword id="KW-0699">rRNA-binding</keyword>